<name>HIS81_PSEPF</name>
<gene>
    <name evidence="1" type="primary">hisC1</name>
    <name type="ordered locus">Pfl01_0872</name>
</gene>
<proteinExistence type="inferred from homology"/>
<protein>
    <recommendedName>
        <fullName evidence="1">Histidinol-phosphate aminotransferase 1</fullName>
        <ecNumber evidence="1">2.6.1.9</ecNumber>
    </recommendedName>
    <alternativeName>
        <fullName evidence="1">Imidazole acetol-phosphate transaminase 1</fullName>
    </alternativeName>
</protein>
<keyword id="KW-0028">Amino-acid biosynthesis</keyword>
<keyword id="KW-0032">Aminotransferase</keyword>
<keyword id="KW-0368">Histidine biosynthesis</keyword>
<keyword id="KW-0663">Pyridoxal phosphate</keyword>
<keyword id="KW-0808">Transferase</keyword>
<organism>
    <name type="scientific">Pseudomonas fluorescens (strain Pf0-1)</name>
    <dbReference type="NCBI Taxonomy" id="205922"/>
    <lineage>
        <taxon>Bacteria</taxon>
        <taxon>Pseudomonadati</taxon>
        <taxon>Pseudomonadota</taxon>
        <taxon>Gammaproteobacteria</taxon>
        <taxon>Pseudomonadales</taxon>
        <taxon>Pseudomonadaceae</taxon>
        <taxon>Pseudomonas</taxon>
    </lineage>
</organism>
<evidence type="ECO:0000255" key="1">
    <source>
        <dbReference type="HAMAP-Rule" id="MF_01023"/>
    </source>
</evidence>
<accession>Q3KHZ1</accession>
<sequence>MSKFWSPFVKDLVPYVPGEQPKLTRLVKLNTNENPYGPSPKALAAMQAELNDNLRLYPDPNSDLLKNAVAKYYGVQNNQVFLGNGSDEVLAHIFHGLLQHDQPILFPDISYSFYPVYCGLYGITFDAVPLDAQFRINPADYAKPNGGIIFPNPNAPTGCLLALEAVEQILKGSPDSVVVVDEAYIDFGGETAISLVDRYPNLLVTQTLSKSRSLAGLRVGLAVGHPDLIEALERIKNSFNSYPIDRMANVGAAAAFEDREYFDKTCALVIESREWVVAQLQAKGFEVLPSAANFIFARHPQHDAAGLAAKLREQGVIVRHFKQERIAQFLRISIGTPEQNQALIDGLGEL</sequence>
<reference key="1">
    <citation type="journal article" date="2009" name="Genome Biol.">
        <title>Genomic and genetic analyses of diversity and plant interactions of Pseudomonas fluorescens.</title>
        <authorList>
            <person name="Silby M.W."/>
            <person name="Cerdeno-Tarraga A.M."/>
            <person name="Vernikos G.S."/>
            <person name="Giddens S.R."/>
            <person name="Jackson R.W."/>
            <person name="Preston G.M."/>
            <person name="Zhang X.-X."/>
            <person name="Moon C.D."/>
            <person name="Gehrig S.M."/>
            <person name="Godfrey S.A.C."/>
            <person name="Knight C.G."/>
            <person name="Malone J.G."/>
            <person name="Robinson Z."/>
            <person name="Spiers A.J."/>
            <person name="Harris S."/>
            <person name="Challis G.L."/>
            <person name="Yaxley A.M."/>
            <person name="Harris D."/>
            <person name="Seeger K."/>
            <person name="Murphy L."/>
            <person name="Rutter S."/>
            <person name="Squares R."/>
            <person name="Quail M.A."/>
            <person name="Saunders E."/>
            <person name="Mavromatis K."/>
            <person name="Brettin T.S."/>
            <person name="Bentley S.D."/>
            <person name="Hothersall J."/>
            <person name="Stephens E."/>
            <person name="Thomas C.M."/>
            <person name="Parkhill J."/>
            <person name="Levy S.B."/>
            <person name="Rainey P.B."/>
            <person name="Thomson N.R."/>
        </authorList>
    </citation>
    <scope>NUCLEOTIDE SEQUENCE [LARGE SCALE GENOMIC DNA]</scope>
    <source>
        <strain>Pf0-1</strain>
    </source>
</reference>
<dbReference type="EC" id="2.6.1.9" evidence="1"/>
<dbReference type="EMBL" id="CP000094">
    <property type="protein sequence ID" value="ABA72615.1"/>
    <property type="molecule type" value="Genomic_DNA"/>
</dbReference>
<dbReference type="SMR" id="Q3KHZ1"/>
<dbReference type="KEGG" id="pfo:Pfl01_0872"/>
<dbReference type="eggNOG" id="COG0079">
    <property type="taxonomic scope" value="Bacteria"/>
</dbReference>
<dbReference type="HOGENOM" id="CLU_017584_3_0_6"/>
<dbReference type="UniPathway" id="UPA00031">
    <property type="reaction ID" value="UER00012"/>
</dbReference>
<dbReference type="Proteomes" id="UP000002704">
    <property type="component" value="Chromosome"/>
</dbReference>
<dbReference type="GO" id="GO:0004400">
    <property type="term" value="F:histidinol-phosphate transaminase activity"/>
    <property type="evidence" value="ECO:0007669"/>
    <property type="project" value="UniProtKB-UniRule"/>
</dbReference>
<dbReference type="GO" id="GO:0030170">
    <property type="term" value="F:pyridoxal phosphate binding"/>
    <property type="evidence" value="ECO:0007669"/>
    <property type="project" value="InterPro"/>
</dbReference>
<dbReference type="GO" id="GO:0000105">
    <property type="term" value="P:L-histidine biosynthetic process"/>
    <property type="evidence" value="ECO:0007669"/>
    <property type="project" value="UniProtKB-UniRule"/>
</dbReference>
<dbReference type="CDD" id="cd00609">
    <property type="entry name" value="AAT_like"/>
    <property type="match status" value="1"/>
</dbReference>
<dbReference type="Gene3D" id="3.90.1150.10">
    <property type="entry name" value="Aspartate Aminotransferase, domain 1"/>
    <property type="match status" value="1"/>
</dbReference>
<dbReference type="Gene3D" id="3.40.640.10">
    <property type="entry name" value="Type I PLP-dependent aspartate aminotransferase-like (Major domain)"/>
    <property type="match status" value="1"/>
</dbReference>
<dbReference type="HAMAP" id="MF_01023">
    <property type="entry name" value="HisC_aminotrans_2"/>
    <property type="match status" value="1"/>
</dbReference>
<dbReference type="InterPro" id="IPR001917">
    <property type="entry name" value="Aminotrans_II_pyridoxalP_BS"/>
</dbReference>
<dbReference type="InterPro" id="IPR004839">
    <property type="entry name" value="Aminotransferase_I/II_large"/>
</dbReference>
<dbReference type="InterPro" id="IPR005861">
    <property type="entry name" value="HisP_aminotrans"/>
</dbReference>
<dbReference type="InterPro" id="IPR050106">
    <property type="entry name" value="HistidinolP_aminotransfase"/>
</dbReference>
<dbReference type="InterPro" id="IPR015424">
    <property type="entry name" value="PyrdxlP-dep_Trfase"/>
</dbReference>
<dbReference type="InterPro" id="IPR015421">
    <property type="entry name" value="PyrdxlP-dep_Trfase_major"/>
</dbReference>
<dbReference type="InterPro" id="IPR015422">
    <property type="entry name" value="PyrdxlP-dep_Trfase_small"/>
</dbReference>
<dbReference type="NCBIfam" id="TIGR01141">
    <property type="entry name" value="hisC"/>
    <property type="match status" value="1"/>
</dbReference>
<dbReference type="PANTHER" id="PTHR43643:SF3">
    <property type="entry name" value="HISTIDINOL-PHOSPHATE AMINOTRANSFERASE"/>
    <property type="match status" value="1"/>
</dbReference>
<dbReference type="PANTHER" id="PTHR43643">
    <property type="entry name" value="HISTIDINOL-PHOSPHATE AMINOTRANSFERASE 2"/>
    <property type="match status" value="1"/>
</dbReference>
<dbReference type="Pfam" id="PF00155">
    <property type="entry name" value="Aminotran_1_2"/>
    <property type="match status" value="1"/>
</dbReference>
<dbReference type="SUPFAM" id="SSF53383">
    <property type="entry name" value="PLP-dependent transferases"/>
    <property type="match status" value="1"/>
</dbReference>
<dbReference type="PROSITE" id="PS00599">
    <property type="entry name" value="AA_TRANSFER_CLASS_2"/>
    <property type="match status" value="1"/>
</dbReference>
<comment type="catalytic activity">
    <reaction evidence="1">
        <text>L-histidinol phosphate + 2-oxoglutarate = 3-(imidazol-4-yl)-2-oxopropyl phosphate + L-glutamate</text>
        <dbReference type="Rhea" id="RHEA:23744"/>
        <dbReference type="ChEBI" id="CHEBI:16810"/>
        <dbReference type="ChEBI" id="CHEBI:29985"/>
        <dbReference type="ChEBI" id="CHEBI:57766"/>
        <dbReference type="ChEBI" id="CHEBI:57980"/>
        <dbReference type="EC" id="2.6.1.9"/>
    </reaction>
</comment>
<comment type="cofactor">
    <cofactor evidence="1">
        <name>pyridoxal 5'-phosphate</name>
        <dbReference type="ChEBI" id="CHEBI:597326"/>
    </cofactor>
</comment>
<comment type="pathway">
    <text evidence="1">Amino-acid biosynthesis; L-histidine biosynthesis; L-histidine from 5-phospho-alpha-D-ribose 1-diphosphate: step 7/9.</text>
</comment>
<comment type="subunit">
    <text evidence="1">Homodimer.</text>
</comment>
<comment type="similarity">
    <text evidence="1">Belongs to the class-II pyridoxal-phosphate-dependent aminotransferase family. Histidinol-phosphate aminotransferase subfamily.</text>
</comment>
<feature type="chain" id="PRO_0000230220" description="Histidinol-phosphate aminotransferase 1">
    <location>
        <begin position="1"/>
        <end position="350"/>
    </location>
</feature>
<feature type="modified residue" description="N6-(pyridoxal phosphate)lysine" evidence="1">
    <location>
        <position position="210"/>
    </location>
</feature>